<dbReference type="EMBL" id="AJ400877">
    <property type="protein sequence ID" value="CAB92286.1"/>
    <property type="molecule type" value="Genomic_DNA"/>
</dbReference>
<dbReference type="EMBL" id="AK024750">
    <property type="protein sequence ID" value="BAB14984.1"/>
    <property type="molecule type" value="mRNA"/>
</dbReference>
<dbReference type="EMBL" id="BC008835">
    <property type="protein sequence ID" value="AAH08835.1"/>
    <property type="molecule type" value="mRNA"/>
</dbReference>
<dbReference type="EMBL" id="AY211930">
    <property type="protein sequence ID" value="AAO65183.1"/>
    <property type="molecule type" value="mRNA"/>
</dbReference>
<dbReference type="CCDS" id="CCDS31422.1"/>
<dbReference type="RefSeq" id="NP_065696.1">
    <property type="nucleotide sequence ID" value="NM_020645.3"/>
</dbReference>
<dbReference type="SMR" id="Q9NQ35"/>
<dbReference type="BioGRID" id="121183">
    <property type="interactions" value="15"/>
</dbReference>
<dbReference type="FunCoup" id="Q9NQ35">
    <property type="interactions" value="175"/>
</dbReference>
<dbReference type="IntAct" id="Q9NQ35">
    <property type="interactions" value="11"/>
</dbReference>
<dbReference type="MINT" id="Q9NQ35"/>
<dbReference type="STRING" id="9606.ENSP00000310205"/>
<dbReference type="MEROPS" id="A28.002"/>
<dbReference type="GlyConnect" id="662">
    <property type="glycosylation" value="1 N-Linked glycan (1 site)"/>
</dbReference>
<dbReference type="GlyCosmos" id="Q9NQ35">
    <property type="glycosylation" value="1 site, 2 glycans"/>
</dbReference>
<dbReference type="iPTMnet" id="Q9NQ35"/>
<dbReference type="PhosphoSitePlus" id="Q9NQ35"/>
<dbReference type="BioMuta" id="NRIP3"/>
<dbReference type="DMDM" id="34395556"/>
<dbReference type="jPOST" id="Q9NQ35"/>
<dbReference type="MassIVE" id="Q9NQ35"/>
<dbReference type="PaxDb" id="9606-ENSP00000310205"/>
<dbReference type="PeptideAtlas" id="Q9NQ35"/>
<dbReference type="ProteomicsDB" id="82070"/>
<dbReference type="Antibodypedia" id="24183">
    <property type="antibodies" value="215 antibodies from 26 providers"/>
</dbReference>
<dbReference type="DNASU" id="56675"/>
<dbReference type="Ensembl" id="ENST00000309166.8">
    <property type="protein sequence ID" value="ENSP00000310205.3"/>
    <property type="gene ID" value="ENSG00000175352.12"/>
</dbReference>
<dbReference type="GeneID" id="56675"/>
<dbReference type="KEGG" id="hsa:56675"/>
<dbReference type="MANE-Select" id="ENST00000309166.8">
    <property type="protein sequence ID" value="ENSP00000310205.3"/>
    <property type="RefSeq nucleotide sequence ID" value="NM_020645.3"/>
    <property type="RefSeq protein sequence ID" value="NP_065696.1"/>
</dbReference>
<dbReference type="UCSC" id="uc001mhg.2">
    <property type="organism name" value="human"/>
</dbReference>
<dbReference type="AGR" id="HGNC:1167"/>
<dbReference type="CTD" id="56675"/>
<dbReference type="DisGeNET" id="56675"/>
<dbReference type="GeneCards" id="NRIP3"/>
<dbReference type="HGNC" id="HGNC:1167">
    <property type="gene designation" value="NRIP3"/>
</dbReference>
<dbReference type="HPA" id="ENSG00000175352">
    <property type="expression patterns" value="Tissue enhanced (brain, retina, testis)"/>
</dbReference>
<dbReference type="MIM" id="613125">
    <property type="type" value="gene"/>
</dbReference>
<dbReference type="neXtProt" id="NX_Q9NQ35"/>
<dbReference type="OpenTargets" id="ENSG00000175352"/>
<dbReference type="PharmGKB" id="PA25481"/>
<dbReference type="VEuPathDB" id="HostDB:ENSG00000175352"/>
<dbReference type="eggNOG" id="KOG0012">
    <property type="taxonomic scope" value="Eukaryota"/>
</dbReference>
<dbReference type="GeneTree" id="ENSGT00950000182999"/>
<dbReference type="HOGENOM" id="CLU_087166_1_0_1"/>
<dbReference type="InParanoid" id="Q9NQ35"/>
<dbReference type="OMA" id="WTPKNDI"/>
<dbReference type="OrthoDB" id="1047367at2759"/>
<dbReference type="PAN-GO" id="Q9NQ35">
    <property type="GO annotations" value="0 GO annotations based on evolutionary models"/>
</dbReference>
<dbReference type="PhylomeDB" id="Q9NQ35"/>
<dbReference type="TreeFam" id="TF333421"/>
<dbReference type="PathwayCommons" id="Q9NQ35"/>
<dbReference type="SignaLink" id="Q9NQ35"/>
<dbReference type="BioGRID-ORCS" id="56675">
    <property type="hits" value="11 hits in 1152 CRISPR screens"/>
</dbReference>
<dbReference type="ChiTaRS" id="NRIP3">
    <property type="organism name" value="human"/>
</dbReference>
<dbReference type="GenomeRNAi" id="56675"/>
<dbReference type="Pharos" id="Q9NQ35">
    <property type="development level" value="Tdark"/>
</dbReference>
<dbReference type="PRO" id="PR:Q9NQ35"/>
<dbReference type="Proteomes" id="UP000005640">
    <property type="component" value="Chromosome 11"/>
</dbReference>
<dbReference type="RNAct" id="Q9NQ35">
    <property type="molecule type" value="protein"/>
</dbReference>
<dbReference type="Bgee" id="ENSG00000175352">
    <property type="expression patterns" value="Expressed in lateral nuclear group of thalamus and 158 other cell types or tissues"/>
</dbReference>
<dbReference type="ExpressionAtlas" id="Q9NQ35">
    <property type="expression patterns" value="baseline and differential"/>
</dbReference>
<dbReference type="GO" id="GO:0004190">
    <property type="term" value="F:aspartic-type endopeptidase activity"/>
    <property type="evidence" value="ECO:0007669"/>
    <property type="project" value="InterPro"/>
</dbReference>
<dbReference type="GO" id="GO:0006508">
    <property type="term" value="P:proteolysis"/>
    <property type="evidence" value="ECO:0007669"/>
    <property type="project" value="InterPro"/>
</dbReference>
<dbReference type="CDD" id="cd05480">
    <property type="entry name" value="NRIP_C"/>
    <property type="match status" value="1"/>
</dbReference>
<dbReference type="Gene3D" id="2.40.70.10">
    <property type="entry name" value="Acid Proteases"/>
    <property type="match status" value="1"/>
</dbReference>
<dbReference type="InterPro" id="IPR033821">
    <property type="entry name" value="NRIP_C"/>
</dbReference>
<dbReference type="InterPro" id="IPR019103">
    <property type="entry name" value="Peptidase_aspartic_DDI1-type"/>
</dbReference>
<dbReference type="InterPro" id="IPR021109">
    <property type="entry name" value="Peptidase_aspartic_dom_sf"/>
</dbReference>
<dbReference type="PANTHER" id="PTHR12917">
    <property type="entry name" value="ASPARTYL PROTEASE DDI-RELATED"/>
    <property type="match status" value="1"/>
</dbReference>
<dbReference type="PANTHER" id="PTHR12917:SF16">
    <property type="entry name" value="NUCLEAR RECEPTOR-INTERACTING PROTEIN 3"/>
    <property type="match status" value="1"/>
</dbReference>
<dbReference type="Pfam" id="PF09668">
    <property type="entry name" value="Asp_protease"/>
    <property type="match status" value="1"/>
</dbReference>
<dbReference type="SUPFAM" id="SSF50630">
    <property type="entry name" value="Acid proteases"/>
    <property type="match status" value="1"/>
</dbReference>
<comment type="interaction">
    <interactant intactId="EBI-10311735">
        <id>Q9NQ35</id>
    </interactant>
    <interactant intactId="EBI-725606">
        <id>Q9NWQ9</id>
        <label>C14orf119</label>
    </interactant>
    <organismsDiffer>false</organismsDiffer>
    <experiments>3</experiments>
</comment>
<comment type="interaction">
    <interactant intactId="EBI-10311735">
        <id>Q9NQ35</id>
    </interactant>
    <interactant intactId="EBI-295634">
        <id>Q16543</id>
        <label>CDC37</label>
    </interactant>
    <organismsDiffer>false</organismsDiffer>
    <experiments>3</experiments>
</comment>
<comment type="interaction">
    <interactant intactId="EBI-10311735">
        <id>Q9NQ35</id>
    </interactant>
    <interactant intactId="EBI-743105">
        <id>Q5JVL4</id>
        <label>EFHC1</label>
    </interactant>
    <organismsDiffer>false</organismsDiffer>
    <experiments>3</experiments>
</comment>
<comment type="interaction">
    <interactant intactId="EBI-10311735">
        <id>Q9NQ35</id>
    </interactant>
    <interactant intactId="EBI-749265">
        <id>Q8N6L0</id>
        <label>KASH5</label>
    </interactant>
    <organismsDiffer>false</organismsDiffer>
    <experiments>6</experiments>
</comment>
<comment type="interaction">
    <interactant intactId="EBI-10311735">
        <id>Q9NQ35</id>
    </interactant>
    <interactant intactId="EBI-591778">
        <id>P61970</id>
        <label>NUTF2</label>
    </interactant>
    <organismsDiffer>false</organismsDiffer>
    <experiments>3</experiments>
</comment>
<comment type="interaction">
    <interactant intactId="EBI-10311735">
        <id>Q9NQ35</id>
    </interactant>
    <interactant intactId="EBI-607755">
        <id>Q9BZL1</id>
        <label>UBL5</label>
    </interactant>
    <organismsDiffer>false</organismsDiffer>
    <experiments>3</experiments>
</comment>
<reference key="1">
    <citation type="journal article" date="2001" name="Cytogenet. Cell Genet.">
        <title>Comparative genomic sequencing reveals a strikingly similar architecture of a conserved syntenic region on human chromosome 11p15.3 (including gene ST5) and mouse chromosome 7.</title>
        <authorList>
            <person name="Amid C."/>
            <person name="Bahr A."/>
            <person name="Mujica A."/>
            <person name="Sampson N."/>
            <person name="Bikar S.E."/>
            <person name="Winterpacht A."/>
            <person name="Zabel B."/>
            <person name="Hankeln T."/>
            <person name="Schmidt E.R."/>
        </authorList>
    </citation>
    <scope>NUCLEOTIDE SEQUENCE [GENOMIC DNA]</scope>
</reference>
<reference key="2">
    <citation type="journal article" date="2004" name="Nat. Genet.">
        <title>Complete sequencing and characterization of 21,243 full-length human cDNAs.</title>
        <authorList>
            <person name="Ota T."/>
            <person name="Suzuki Y."/>
            <person name="Nishikawa T."/>
            <person name="Otsuki T."/>
            <person name="Sugiyama T."/>
            <person name="Irie R."/>
            <person name="Wakamatsu A."/>
            <person name="Hayashi K."/>
            <person name="Sato H."/>
            <person name="Nagai K."/>
            <person name="Kimura K."/>
            <person name="Makita H."/>
            <person name="Sekine M."/>
            <person name="Obayashi M."/>
            <person name="Nishi T."/>
            <person name="Shibahara T."/>
            <person name="Tanaka T."/>
            <person name="Ishii S."/>
            <person name="Yamamoto J."/>
            <person name="Saito K."/>
            <person name="Kawai Y."/>
            <person name="Isono Y."/>
            <person name="Nakamura Y."/>
            <person name="Nagahari K."/>
            <person name="Murakami K."/>
            <person name="Yasuda T."/>
            <person name="Iwayanagi T."/>
            <person name="Wagatsuma M."/>
            <person name="Shiratori A."/>
            <person name="Sudo H."/>
            <person name="Hosoiri T."/>
            <person name="Kaku Y."/>
            <person name="Kodaira H."/>
            <person name="Kondo H."/>
            <person name="Sugawara M."/>
            <person name="Takahashi M."/>
            <person name="Kanda K."/>
            <person name="Yokoi T."/>
            <person name="Furuya T."/>
            <person name="Kikkawa E."/>
            <person name="Omura Y."/>
            <person name="Abe K."/>
            <person name="Kamihara K."/>
            <person name="Katsuta N."/>
            <person name="Sato K."/>
            <person name="Tanikawa M."/>
            <person name="Yamazaki M."/>
            <person name="Ninomiya K."/>
            <person name="Ishibashi T."/>
            <person name="Yamashita H."/>
            <person name="Murakawa K."/>
            <person name="Fujimori K."/>
            <person name="Tanai H."/>
            <person name="Kimata M."/>
            <person name="Watanabe M."/>
            <person name="Hiraoka S."/>
            <person name="Chiba Y."/>
            <person name="Ishida S."/>
            <person name="Ono Y."/>
            <person name="Takiguchi S."/>
            <person name="Watanabe S."/>
            <person name="Yosida M."/>
            <person name="Hotuta T."/>
            <person name="Kusano J."/>
            <person name="Kanehori K."/>
            <person name="Takahashi-Fujii A."/>
            <person name="Hara H."/>
            <person name="Tanase T.-O."/>
            <person name="Nomura Y."/>
            <person name="Togiya S."/>
            <person name="Komai F."/>
            <person name="Hara R."/>
            <person name="Takeuchi K."/>
            <person name="Arita M."/>
            <person name="Imose N."/>
            <person name="Musashino K."/>
            <person name="Yuuki H."/>
            <person name="Oshima A."/>
            <person name="Sasaki N."/>
            <person name="Aotsuka S."/>
            <person name="Yoshikawa Y."/>
            <person name="Matsunawa H."/>
            <person name="Ichihara T."/>
            <person name="Shiohata N."/>
            <person name="Sano S."/>
            <person name="Moriya S."/>
            <person name="Momiyama H."/>
            <person name="Satoh N."/>
            <person name="Takami S."/>
            <person name="Terashima Y."/>
            <person name="Suzuki O."/>
            <person name="Nakagawa S."/>
            <person name="Senoh A."/>
            <person name="Mizoguchi H."/>
            <person name="Goto Y."/>
            <person name="Shimizu F."/>
            <person name="Wakebe H."/>
            <person name="Hishigaki H."/>
            <person name="Watanabe T."/>
            <person name="Sugiyama A."/>
            <person name="Takemoto M."/>
            <person name="Kawakami B."/>
            <person name="Yamazaki M."/>
            <person name="Watanabe K."/>
            <person name="Kumagai A."/>
            <person name="Itakura S."/>
            <person name="Fukuzumi Y."/>
            <person name="Fujimori Y."/>
            <person name="Komiyama M."/>
            <person name="Tashiro H."/>
            <person name="Tanigami A."/>
            <person name="Fujiwara T."/>
            <person name="Ono T."/>
            <person name="Yamada K."/>
            <person name="Fujii Y."/>
            <person name="Ozaki K."/>
            <person name="Hirao M."/>
            <person name="Ohmori Y."/>
            <person name="Kawabata A."/>
            <person name="Hikiji T."/>
            <person name="Kobatake N."/>
            <person name="Inagaki H."/>
            <person name="Ikema Y."/>
            <person name="Okamoto S."/>
            <person name="Okitani R."/>
            <person name="Kawakami T."/>
            <person name="Noguchi S."/>
            <person name="Itoh T."/>
            <person name="Shigeta K."/>
            <person name="Senba T."/>
            <person name="Matsumura K."/>
            <person name="Nakajima Y."/>
            <person name="Mizuno T."/>
            <person name="Morinaga M."/>
            <person name="Sasaki M."/>
            <person name="Togashi T."/>
            <person name="Oyama M."/>
            <person name="Hata H."/>
            <person name="Watanabe M."/>
            <person name="Komatsu T."/>
            <person name="Mizushima-Sugano J."/>
            <person name="Satoh T."/>
            <person name="Shirai Y."/>
            <person name="Takahashi Y."/>
            <person name="Nakagawa K."/>
            <person name="Okumura K."/>
            <person name="Nagase T."/>
            <person name="Nomura N."/>
            <person name="Kikuchi H."/>
            <person name="Masuho Y."/>
            <person name="Yamashita R."/>
            <person name="Nakai K."/>
            <person name="Yada T."/>
            <person name="Nakamura Y."/>
            <person name="Ohara O."/>
            <person name="Isogai T."/>
            <person name="Sugano S."/>
        </authorList>
    </citation>
    <scope>NUCLEOTIDE SEQUENCE [LARGE SCALE MRNA]</scope>
</reference>
<reference key="3">
    <citation type="journal article" date="2004" name="Genome Res.">
        <title>The status, quality, and expansion of the NIH full-length cDNA project: the Mammalian Gene Collection (MGC).</title>
        <authorList>
            <consortium name="The MGC Project Team"/>
        </authorList>
    </citation>
    <scope>NUCLEOTIDE SEQUENCE [LARGE SCALE MRNA]</scope>
    <source>
        <tissue>Uterus</tissue>
    </source>
</reference>
<reference key="4">
    <citation type="journal article" date="2003" name="Proc. Natl. Acad. Sci. U.S.A.">
        <title>Immunomic analysis of human sarcoma.</title>
        <authorList>
            <person name="Lee S.-Y."/>
            <person name="Obata Y."/>
            <person name="Yoshida M."/>
            <person name="Stockert E."/>
            <person name="Williamson B."/>
            <person name="Jungbluth A.A."/>
            <person name="Chen Y.-T."/>
            <person name="Old L.J."/>
            <person name="Scanlan M.J."/>
        </authorList>
    </citation>
    <scope>NUCLEOTIDE SEQUENCE [MRNA] OF 64-241</scope>
</reference>
<name>NRIP3_HUMAN</name>
<gene>
    <name type="primary">NRIP3</name>
    <name type="synonym">C11orf14</name>
</gene>
<organism>
    <name type="scientific">Homo sapiens</name>
    <name type="common">Human</name>
    <dbReference type="NCBI Taxonomy" id="9606"/>
    <lineage>
        <taxon>Eukaryota</taxon>
        <taxon>Metazoa</taxon>
        <taxon>Chordata</taxon>
        <taxon>Craniata</taxon>
        <taxon>Vertebrata</taxon>
        <taxon>Euteleostomi</taxon>
        <taxon>Mammalia</taxon>
        <taxon>Eutheria</taxon>
        <taxon>Euarchontoglires</taxon>
        <taxon>Primates</taxon>
        <taxon>Haplorrhini</taxon>
        <taxon>Catarrhini</taxon>
        <taxon>Hominidae</taxon>
        <taxon>Homo</taxon>
    </lineage>
</organism>
<proteinExistence type="evidence at protein level"/>
<accession>Q9NQ35</accession>
<accession>Q86WD9</accession>
<sequence>MFYSGLLTEGGRKETDMREAASLRQQRRMKQAVQFIHKDSADLLPLDGLKKLGSSKDMQPHNILQRRLMETNLSKLRSGPRVPWASKTNKLNQAKSEGLKKSEEDDMILVSCQCAGKDVKALVDTGCLYNLISLACVDRLGLKEHVKSHKHEGEKLSLPRHLKVVGQIEHLVITLGSLRLDCPAAVVDDNEKNLSLGLQTLRSLKCIINLDKHRLIMGKTDKEEIPFVETVSLNEDNTSEA</sequence>
<feature type="chain" id="PRO_0000057953" description="Nuclear receptor-interacting protein 3">
    <location>
        <begin position="1"/>
        <end position="241"/>
    </location>
</feature>
<keyword id="KW-1267">Proteomics identification</keyword>
<keyword id="KW-1185">Reference proteome</keyword>
<protein>
    <recommendedName>
        <fullName>Nuclear receptor-interacting protein 3</fullName>
    </recommendedName>
    <alternativeName>
        <fullName>Sarcoma antigen NY-SAR-105</fullName>
    </alternativeName>
</protein>